<name>CHEB3_HAHCH</name>
<feature type="chain" id="PRO_0000264283" description="Protein-glutamate methylesterase/protein-glutamine glutaminase 3">
    <location>
        <begin position="1"/>
        <end position="349"/>
    </location>
</feature>
<feature type="domain" description="Response regulatory" evidence="1">
    <location>
        <begin position="2"/>
        <end position="119"/>
    </location>
</feature>
<feature type="domain" description="CheB-type methylesterase" evidence="1">
    <location>
        <begin position="157"/>
        <end position="340"/>
    </location>
</feature>
<feature type="active site" evidence="1">
    <location>
        <position position="169"/>
    </location>
</feature>
<feature type="active site" evidence="1">
    <location>
        <position position="196"/>
    </location>
</feature>
<feature type="active site" evidence="1">
    <location>
        <position position="289"/>
    </location>
</feature>
<feature type="modified residue" description="4-aspartylphosphate" evidence="1">
    <location>
        <position position="52"/>
    </location>
</feature>
<proteinExistence type="inferred from homology"/>
<sequence>MDVLIVDDSPVIRQLLRHIIEEGGMRVIGEASNGVEALRCIARRRPDVITMDIHMPVMDGLEASRRIMEEYPTPIVVVTASYSLGDAVTAMQVLEAGAITVTPKPQGPSHPDFERDVESLLRTIRLISEVKVVRRFRRRQGKREEVQPPPPVNHEHEGFQPGVIAIGASTGGPVALKELLQGISRKTPCPVLVVQHISPGFLTSFCEWLNQVSALPVSIGEYGERAERGRVYLAPDGCHMEVDRSCRISLVNGNRDETLCPSVSRLFSSVAKNFGRNAVVVLLSGMGRDGAAEMAELHRLGALTIAQDPATVVVNGMPGEAVKLGAARHVLSPPRIAALLNELPVQSCV</sequence>
<gene>
    <name evidence="1" type="primary">cheB3</name>
    <name type="ordered locus">HCH_03846</name>
</gene>
<accession>Q2SFK0</accession>
<comment type="function">
    <text evidence="1">Involved in chemotaxis. Part of a chemotaxis signal transduction system that modulates chemotaxis in response to various stimuli. Catalyzes the demethylation of specific methylglutamate residues introduced into the chemoreceptors (methyl-accepting chemotaxis proteins or MCP) by CheR. Also mediates the irreversible deamidation of specific glutamine residues to glutamic acid.</text>
</comment>
<comment type="catalytic activity">
    <reaction evidence="1">
        <text>[protein]-L-glutamate 5-O-methyl ester + H2O = L-glutamyl-[protein] + methanol + H(+)</text>
        <dbReference type="Rhea" id="RHEA:23236"/>
        <dbReference type="Rhea" id="RHEA-COMP:10208"/>
        <dbReference type="Rhea" id="RHEA-COMP:10311"/>
        <dbReference type="ChEBI" id="CHEBI:15377"/>
        <dbReference type="ChEBI" id="CHEBI:15378"/>
        <dbReference type="ChEBI" id="CHEBI:17790"/>
        <dbReference type="ChEBI" id="CHEBI:29973"/>
        <dbReference type="ChEBI" id="CHEBI:82795"/>
        <dbReference type="EC" id="3.1.1.61"/>
    </reaction>
</comment>
<comment type="catalytic activity">
    <reaction evidence="1">
        <text>L-glutaminyl-[protein] + H2O = L-glutamyl-[protein] + NH4(+)</text>
        <dbReference type="Rhea" id="RHEA:16441"/>
        <dbReference type="Rhea" id="RHEA-COMP:10207"/>
        <dbReference type="Rhea" id="RHEA-COMP:10208"/>
        <dbReference type="ChEBI" id="CHEBI:15377"/>
        <dbReference type="ChEBI" id="CHEBI:28938"/>
        <dbReference type="ChEBI" id="CHEBI:29973"/>
        <dbReference type="ChEBI" id="CHEBI:30011"/>
        <dbReference type="EC" id="3.5.1.44"/>
    </reaction>
</comment>
<comment type="subcellular location">
    <subcellularLocation>
        <location evidence="1">Cytoplasm</location>
    </subcellularLocation>
</comment>
<comment type="domain">
    <text evidence="1">Contains a C-terminal catalytic domain, and an N-terminal region which modulates catalytic activity.</text>
</comment>
<comment type="PTM">
    <text evidence="1">Phosphorylated by CheA. Phosphorylation of the N-terminal regulatory domain activates the methylesterase activity.</text>
</comment>
<comment type="similarity">
    <text evidence="1">Belongs to the CheB family.</text>
</comment>
<protein>
    <recommendedName>
        <fullName evidence="1">Protein-glutamate methylesterase/protein-glutamine glutaminase 3</fullName>
        <ecNumber evidence="1">3.1.1.61</ecNumber>
        <ecNumber evidence="1">3.5.1.44</ecNumber>
    </recommendedName>
</protein>
<reference key="1">
    <citation type="journal article" date="2005" name="Nucleic Acids Res.">
        <title>Genomic blueprint of Hahella chejuensis, a marine microbe producing an algicidal agent.</title>
        <authorList>
            <person name="Jeong H."/>
            <person name="Yim J.H."/>
            <person name="Lee C."/>
            <person name="Choi S.-H."/>
            <person name="Park Y.K."/>
            <person name="Yoon S.H."/>
            <person name="Hur C.-G."/>
            <person name="Kang H.-Y."/>
            <person name="Kim D."/>
            <person name="Lee H.H."/>
            <person name="Park K.H."/>
            <person name="Park S.-H."/>
            <person name="Park H.-S."/>
            <person name="Lee H.K."/>
            <person name="Oh T.K."/>
            <person name="Kim J.F."/>
        </authorList>
    </citation>
    <scope>NUCLEOTIDE SEQUENCE [LARGE SCALE GENOMIC DNA]</scope>
    <source>
        <strain>KCTC 2396</strain>
    </source>
</reference>
<organism>
    <name type="scientific">Hahella chejuensis (strain KCTC 2396)</name>
    <dbReference type="NCBI Taxonomy" id="349521"/>
    <lineage>
        <taxon>Bacteria</taxon>
        <taxon>Pseudomonadati</taxon>
        <taxon>Pseudomonadota</taxon>
        <taxon>Gammaproteobacteria</taxon>
        <taxon>Oceanospirillales</taxon>
        <taxon>Hahellaceae</taxon>
        <taxon>Hahella</taxon>
    </lineage>
</organism>
<dbReference type="EC" id="3.1.1.61" evidence="1"/>
<dbReference type="EC" id="3.5.1.44" evidence="1"/>
<dbReference type="EMBL" id="CP000155">
    <property type="protein sequence ID" value="ABC30574.1"/>
    <property type="molecule type" value="Genomic_DNA"/>
</dbReference>
<dbReference type="RefSeq" id="WP_011397641.1">
    <property type="nucleotide sequence ID" value="NC_007645.1"/>
</dbReference>
<dbReference type="SMR" id="Q2SFK0"/>
<dbReference type="STRING" id="349521.HCH_03846"/>
<dbReference type="KEGG" id="hch:HCH_03846"/>
<dbReference type="eggNOG" id="COG2201">
    <property type="taxonomic scope" value="Bacteria"/>
</dbReference>
<dbReference type="HOGENOM" id="CLU_000445_51_0_6"/>
<dbReference type="OrthoDB" id="9793421at2"/>
<dbReference type="Proteomes" id="UP000000238">
    <property type="component" value="Chromosome"/>
</dbReference>
<dbReference type="GO" id="GO:0005737">
    <property type="term" value="C:cytoplasm"/>
    <property type="evidence" value="ECO:0007669"/>
    <property type="project" value="UniProtKB-SubCell"/>
</dbReference>
<dbReference type="GO" id="GO:0000156">
    <property type="term" value="F:phosphorelay response regulator activity"/>
    <property type="evidence" value="ECO:0007669"/>
    <property type="project" value="InterPro"/>
</dbReference>
<dbReference type="GO" id="GO:0008984">
    <property type="term" value="F:protein-glutamate methylesterase activity"/>
    <property type="evidence" value="ECO:0007669"/>
    <property type="project" value="UniProtKB-UniRule"/>
</dbReference>
<dbReference type="GO" id="GO:0050568">
    <property type="term" value="F:protein-glutamine glutaminase activity"/>
    <property type="evidence" value="ECO:0007669"/>
    <property type="project" value="UniProtKB-UniRule"/>
</dbReference>
<dbReference type="GO" id="GO:0006935">
    <property type="term" value="P:chemotaxis"/>
    <property type="evidence" value="ECO:0007669"/>
    <property type="project" value="UniProtKB-UniRule"/>
</dbReference>
<dbReference type="CDD" id="cd16432">
    <property type="entry name" value="CheB_Rec"/>
    <property type="match status" value="1"/>
</dbReference>
<dbReference type="CDD" id="cd17541">
    <property type="entry name" value="REC_CheB-like"/>
    <property type="match status" value="1"/>
</dbReference>
<dbReference type="Gene3D" id="3.40.50.2300">
    <property type="match status" value="1"/>
</dbReference>
<dbReference type="Gene3D" id="3.40.50.180">
    <property type="entry name" value="Methylesterase CheB, C-terminal domain"/>
    <property type="match status" value="1"/>
</dbReference>
<dbReference type="HAMAP" id="MF_00099">
    <property type="entry name" value="CheB_chemtxs"/>
    <property type="match status" value="1"/>
</dbReference>
<dbReference type="InterPro" id="IPR008248">
    <property type="entry name" value="CheB-like"/>
</dbReference>
<dbReference type="InterPro" id="IPR035909">
    <property type="entry name" value="CheB_C"/>
</dbReference>
<dbReference type="InterPro" id="IPR011006">
    <property type="entry name" value="CheY-like_superfamily"/>
</dbReference>
<dbReference type="InterPro" id="IPR000673">
    <property type="entry name" value="Sig_transdc_resp-reg_Me-estase"/>
</dbReference>
<dbReference type="InterPro" id="IPR001789">
    <property type="entry name" value="Sig_transdc_resp-reg_receiver"/>
</dbReference>
<dbReference type="NCBIfam" id="NF001965">
    <property type="entry name" value="PRK00742.1"/>
    <property type="match status" value="1"/>
</dbReference>
<dbReference type="PANTHER" id="PTHR42872">
    <property type="entry name" value="PROTEIN-GLUTAMATE METHYLESTERASE/PROTEIN-GLUTAMINE GLUTAMINASE"/>
    <property type="match status" value="1"/>
</dbReference>
<dbReference type="PANTHER" id="PTHR42872:SF6">
    <property type="entry name" value="PROTEIN-GLUTAMATE METHYLESTERASE_PROTEIN-GLUTAMINE GLUTAMINASE"/>
    <property type="match status" value="1"/>
</dbReference>
<dbReference type="Pfam" id="PF01339">
    <property type="entry name" value="CheB_methylest"/>
    <property type="match status" value="1"/>
</dbReference>
<dbReference type="Pfam" id="PF00072">
    <property type="entry name" value="Response_reg"/>
    <property type="match status" value="1"/>
</dbReference>
<dbReference type="PIRSF" id="PIRSF000876">
    <property type="entry name" value="RR_chemtxs_CheB"/>
    <property type="match status" value="1"/>
</dbReference>
<dbReference type="SMART" id="SM00448">
    <property type="entry name" value="REC"/>
    <property type="match status" value="1"/>
</dbReference>
<dbReference type="SUPFAM" id="SSF52172">
    <property type="entry name" value="CheY-like"/>
    <property type="match status" value="1"/>
</dbReference>
<dbReference type="SUPFAM" id="SSF52738">
    <property type="entry name" value="Methylesterase CheB, C-terminal domain"/>
    <property type="match status" value="1"/>
</dbReference>
<dbReference type="PROSITE" id="PS50122">
    <property type="entry name" value="CHEB"/>
    <property type="match status" value="1"/>
</dbReference>
<dbReference type="PROSITE" id="PS50110">
    <property type="entry name" value="RESPONSE_REGULATORY"/>
    <property type="match status" value="1"/>
</dbReference>
<keyword id="KW-0145">Chemotaxis</keyword>
<keyword id="KW-0963">Cytoplasm</keyword>
<keyword id="KW-0378">Hydrolase</keyword>
<keyword id="KW-0597">Phosphoprotein</keyword>
<keyword id="KW-1185">Reference proteome</keyword>
<evidence type="ECO:0000255" key="1">
    <source>
        <dbReference type="HAMAP-Rule" id="MF_00099"/>
    </source>
</evidence>